<accession>Q2MI89</accession>
<evidence type="ECO:0000255" key="1">
    <source>
        <dbReference type="HAMAP-Rule" id="MF_00437"/>
    </source>
</evidence>
<keyword id="KW-0150">Chloroplast</keyword>
<keyword id="KW-0472">Membrane</keyword>
<keyword id="KW-0602">Photosynthesis</keyword>
<keyword id="KW-0934">Plastid</keyword>
<keyword id="KW-1185">Reference proteome</keyword>
<keyword id="KW-0793">Thylakoid</keyword>
<keyword id="KW-0812">Transmembrane</keyword>
<keyword id="KW-1133">Transmembrane helix</keyword>
<dbReference type="EMBL" id="DQ347959">
    <property type="protein sequence ID" value="ABC56311.1"/>
    <property type="molecule type" value="Genomic_DNA"/>
</dbReference>
<dbReference type="EMBL" id="AM087200">
    <property type="protein sequence ID" value="CAJ32404.1"/>
    <property type="molecule type" value="Genomic_DNA"/>
</dbReference>
<dbReference type="RefSeq" id="AP_004939.1">
    <property type="nucleotide sequence ID" value="AC_000188.1"/>
</dbReference>
<dbReference type="RefSeq" id="YP_008563099.1">
    <property type="nucleotide sequence ID" value="NC_007898.3"/>
</dbReference>
<dbReference type="FunCoup" id="Q2MI89">
    <property type="interactions" value="87"/>
</dbReference>
<dbReference type="STRING" id="4081.Q2MI89"/>
<dbReference type="PaxDb" id="4081-Solyc01g007360.2.1"/>
<dbReference type="GeneID" id="3950385"/>
<dbReference type="KEGG" id="sly:3950385"/>
<dbReference type="eggNOG" id="ENOG502QWGG">
    <property type="taxonomic scope" value="Eukaryota"/>
</dbReference>
<dbReference type="HOGENOM" id="CLU_095465_0_0_1"/>
<dbReference type="InParanoid" id="Q2MI89"/>
<dbReference type="OrthoDB" id="1287926at2759"/>
<dbReference type="PhylomeDB" id="Q2MI89"/>
<dbReference type="Proteomes" id="UP000004994">
    <property type="component" value="Chloroplast"/>
</dbReference>
<dbReference type="ExpressionAtlas" id="Q2MI89">
    <property type="expression patterns" value="baseline"/>
</dbReference>
<dbReference type="GO" id="GO:0009535">
    <property type="term" value="C:chloroplast thylakoid membrane"/>
    <property type="evidence" value="ECO:0007669"/>
    <property type="project" value="UniProtKB-SubCell"/>
</dbReference>
<dbReference type="GO" id="GO:0009522">
    <property type="term" value="C:photosystem I"/>
    <property type="evidence" value="ECO:0007669"/>
    <property type="project" value="InterPro"/>
</dbReference>
<dbReference type="GO" id="GO:0015979">
    <property type="term" value="P:photosynthesis"/>
    <property type="evidence" value="ECO:0007669"/>
    <property type="project" value="UniProtKB-UniRule"/>
</dbReference>
<dbReference type="HAMAP" id="MF_00437">
    <property type="entry name" value="Ycf4"/>
    <property type="match status" value="1"/>
</dbReference>
<dbReference type="InterPro" id="IPR003359">
    <property type="entry name" value="PSI_Ycf4_assembly"/>
</dbReference>
<dbReference type="NCBIfam" id="NF002712">
    <property type="entry name" value="PRK02542.1"/>
    <property type="match status" value="1"/>
</dbReference>
<dbReference type="PANTHER" id="PTHR33288">
    <property type="match status" value="1"/>
</dbReference>
<dbReference type="PANTHER" id="PTHR33288:SF4">
    <property type="entry name" value="PHOTOSYSTEM I ASSEMBLY PROTEIN YCF4"/>
    <property type="match status" value="1"/>
</dbReference>
<dbReference type="Pfam" id="PF02392">
    <property type="entry name" value="Ycf4"/>
    <property type="match status" value="1"/>
</dbReference>
<sequence length="184" mass="21388">MTWRSDDIWIELITGSRKISNFCWALILFLGSLGFLLVGTSSYLGRNLLSFFPPQQIIFFPQGIVMSFYGIAGLFISSYLWCTISWNVGSGYDRFDRKEGIVCIFRWGFPGKNRRIFLRFLIKDIQSVRIEVKEGIYARRVLYMDIRGQGSIPLTRTDENLTPREIEQKAAELAYFLRVPIEVF</sequence>
<feature type="chain" id="PRO_0000275672" description="Photosystem I assembly protein Ycf4">
    <location>
        <begin position="1"/>
        <end position="184"/>
    </location>
</feature>
<feature type="transmembrane region" description="Helical" evidence="1">
    <location>
        <begin position="19"/>
        <end position="39"/>
    </location>
</feature>
<feature type="transmembrane region" description="Helical" evidence="1">
    <location>
        <begin position="57"/>
        <end position="77"/>
    </location>
</feature>
<protein>
    <recommendedName>
        <fullName evidence="1">Photosystem I assembly protein Ycf4</fullName>
    </recommendedName>
</protein>
<geneLocation type="chloroplast"/>
<comment type="function">
    <text evidence="1">Seems to be required for the assembly of the photosystem I complex.</text>
</comment>
<comment type="subcellular location">
    <subcellularLocation>
        <location evidence="1">Plastid</location>
        <location evidence="1">Chloroplast thylakoid membrane</location>
        <topology evidence="1">Multi-pass membrane protein</topology>
    </subcellularLocation>
</comment>
<comment type="similarity">
    <text evidence="1">Belongs to the Ycf4 family.</text>
</comment>
<organism>
    <name type="scientific">Solanum lycopersicum</name>
    <name type="common">Tomato</name>
    <name type="synonym">Lycopersicon esculentum</name>
    <dbReference type="NCBI Taxonomy" id="4081"/>
    <lineage>
        <taxon>Eukaryota</taxon>
        <taxon>Viridiplantae</taxon>
        <taxon>Streptophyta</taxon>
        <taxon>Embryophyta</taxon>
        <taxon>Tracheophyta</taxon>
        <taxon>Spermatophyta</taxon>
        <taxon>Magnoliopsida</taxon>
        <taxon>eudicotyledons</taxon>
        <taxon>Gunneridae</taxon>
        <taxon>Pentapetalae</taxon>
        <taxon>asterids</taxon>
        <taxon>lamiids</taxon>
        <taxon>Solanales</taxon>
        <taxon>Solanaceae</taxon>
        <taxon>Solanoideae</taxon>
        <taxon>Solaneae</taxon>
        <taxon>Solanum</taxon>
        <taxon>Solanum subgen. Lycopersicon</taxon>
    </lineage>
</organism>
<gene>
    <name evidence="1" type="primary">ycf4</name>
</gene>
<reference key="1">
    <citation type="journal article" date="2006" name="Theor. Appl. Genet.">
        <title>Complete chloroplast genome sequences of Solanum bulbocastanum, Solanum lycopersicum and comparative analyses with other Solanaceae genomes.</title>
        <authorList>
            <person name="Daniell H."/>
            <person name="Lee S.-B."/>
            <person name="Grevich J."/>
            <person name="Saski C."/>
            <person name="Quesada-Vargas T."/>
            <person name="Guda C."/>
            <person name="Tomkins J."/>
            <person name="Jansen R.K."/>
        </authorList>
    </citation>
    <scope>NUCLEOTIDE SEQUENCE [LARGE SCALE GENOMIC DNA]</scope>
    <source>
        <strain>cv. LA3023</strain>
    </source>
</reference>
<reference key="2">
    <citation type="journal article" date="2006" name="J. Mol. Evol.">
        <title>Sequence of the tomato chloroplast DNA and evolutionary comparison of solanaceous plastid genomes.</title>
        <authorList>
            <person name="Kahlau S."/>
            <person name="Aspinall S."/>
            <person name="Gray J.C."/>
            <person name="Bock R."/>
        </authorList>
    </citation>
    <scope>NUCLEOTIDE SEQUENCE [LARGE SCALE GENOMIC DNA]</scope>
    <source>
        <strain>cv. IPA-6</strain>
    </source>
</reference>
<proteinExistence type="inferred from homology"/>
<name>YCF4_SOLLC</name>